<evidence type="ECO:0000250" key="1"/>
<evidence type="ECO:0000255" key="2">
    <source>
        <dbReference type="HAMAP-Rule" id="MF_00492"/>
    </source>
</evidence>
<sequence>MTSKLEQLKQFTTVVADTGDLDAITRLKPVDATTNPSLLLKAAAIPGYADLLKQVKADAKGDVDLACDKFAVAVGSGILKVIPGRISTEVDARLSFDEPALLNKARQLIALYEAAGVPKDRVLIKLASTWEGIRAAEKLEKEGIQTNLTLLFSFAQAQACADAGVFLISPFVGRIYDWYKKSTGKDYVGAEDPGVQSVTRIYNYYKANGYNTVVMGASFRNIGQIEQLAGCDRLTISPELLQQLSDDQGELPQVLKPGNAGEAKQPLNESQFRWAMNEDAMGTEKLAEGIRQFARDQEKLEKLMAEKA</sequence>
<protein>
    <recommendedName>
        <fullName evidence="2">Transaldolase</fullName>
        <ecNumber evidence="2">2.2.1.2</ecNumber>
    </recommendedName>
</protein>
<keyword id="KW-0963">Cytoplasm</keyword>
<keyword id="KW-0570">Pentose shunt</keyword>
<keyword id="KW-0704">Schiff base</keyword>
<keyword id="KW-0808">Transferase</keyword>
<comment type="function">
    <text evidence="2">Transaldolase is important for the balance of metabolites in the pentose-phosphate pathway.</text>
</comment>
<comment type="catalytic activity">
    <reaction evidence="2">
        <text>D-sedoheptulose 7-phosphate + D-glyceraldehyde 3-phosphate = D-erythrose 4-phosphate + beta-D-fructose 6-phosphate</text>
        <dbReference type="Rhea" id="RHEA:17053"/>
        <dbReference type="ChEBI" id="CHEBI:16897"/>
        <dbReference type="ChEBI" id="CHEBI:57483"/>
        <dbReference type="ChEBI" id="CHEBI:57634"/>
        <dbReference type="ChEBI" id="CHEBI:59776"/>
        <dbReference type="EC" id="2.2.1.2"/>
    </reaction>
</comment>
<comment type="pathway">
    <text evidence="2">Carbohydrate degradation; pentose phosphate pathway; D-glyceraldehyde 3-phosphate and beta-D-fructose 6-phosphate from D-ribose 5-phosphate and D-xylulose 5-phosphate (non-oxidative stage): step 2/3.</text>
</comment>
<comment type="subunit">
    <text evidence="1">Homodimer.</text>
</comment>
<comment type="subcellular location">
    <subcellularLocation>
        <location evidence="2">Cytoplasm</location>
    </subcellularLocation>
</comment>
<comment type="similarity">
    <text evidence="2">Belongs to the transaldolase family. Type 1 subfamily.</text>
</comment>
<feature type="chain" id="PRO_1000081397" description="Transaldolase">
    <location>
        <begin position="1"/>
        <end position="308"/>
    </location>
</feature>
<feature type="active site" description="Schiff-base intermediate with substrate" evidence="2">
    <location>
        <position position="125"/>
    </location>
</feature>
<dbReference type="EC" id="2.2.1.2" evidence="2"/>
<dbReference type="EMBL" id="CP000926">
    <property type="protein sequence ID" value="ABY97612.1"/>
    <property type="molecule type" value="Genomic_DNA"/>
</dbReference>
<dbReference type="RefSeq" id="WP_012271373.1">
    <property type="nucleotide sequence ID" value="NC_010322.1"/>
</dbReference>
<dbReference type="SMR" id="B0KHA7"/>
<dbReference type="KEGG" id="ppg:PputGB1_1709"/>
<dbReference type="eggNOG" id="COG0176">
    <property type="taxonomic scope" value="Bacteria"/>
</dbReference>
<dbReference type="HOGENOM" id="CLU_047470_0_1_6"/>
<dbReference type="UniPathway" id="UPA00115">
    <property type="reaction ID" value="UER00414"/>
</dbReference>
<dbReference type="Proteomes" id="UP000002157">
    <property type="component" value="Chromosome"/>
</dbReference>
<dbReference type="GO" id="GO:0005829">
    <property type="term" value="C:cytosol"/>
    <property type="evidence" value="ECO:0007669"/>
    <property type="project" value="TreeGrafter"/>
</dbReference>
<dbReference type="GO" id="GO:0004801">
    <property type="term" value="F:transaldolase activity"/>
    <property type="evidence" value="ECO:0000250"/>
    <property type="project" value="UniProtKB"/>
</dbReference>
<dbReference type="GO" id="GO:0005975">
    <property type="term" value="P:carbohydrate metabolic process"/>
    <property type="evidence" value="ECO:0007669"/>
    <property type="project" value="InterPro"/>
</dbReference>
<dbReference type="GO" id="GO:0006098">
    <property type="term" value="P:pentose-phosphate shunt"/>
    <property type="evidence" value="ECO:0007669"/>
    <property type="project" value="UniProtKB-UniRule"/>
</dbReference>
<dbReference type="CDD" id="cd00957">
    <property type="entry name" value="Transaldolase_TalAB"/>
    <property type="match status" value="1"/>
</dbReference>
<dbReference type="FunFam" id="3.20.20.70:FF:000002">
    <property type="entry name" value="Transaldolase"/>
    <property type="match status" value="1"/>
</dbReference>
<dbReference type="Gene3D" id="3.20.20.70">
    <property type="entry name" value="Aldolase class I"/>
    <property type="match status" value="1"/>
</dbReference>
<dbReference type="HAMAP" id="MF_00492">
    <property type="entry name" value="Transaldolase_1"/>
    <property type="match status" value="1"/>
</dbReference>
<dbReference type="InterPro" id="IPR013785">
    <property type="entry name" value="Aldolase_TIM"/>
</dbReference>
<dbReference type="InterPro" id="IPR001585">
    <property type="entry name" value="TAL/FSA"/>
</dbReference>
<dbReference type="InterPro" id="IPR004730">
    <property type="entry name" value="Transaldolase_1"/>
</dbReference>
<dbReference type="InterPro" id="IPR018225">
    <property type="entry name" value="Transaldolase_AS"/>
</dbReference>
<dbReference type="NCBIfam" id="NF009001">
    <property type="entry name" value="PRK12346.1"/>
    <property type="match status" value="1"/>
</dbReference>
<dbReference type="NCBIfam" id="TIGR00874">
    <property type="entry name" value="talAB"/>
    <property type="match status" value="1"/>
</dbReference>
<dbReference type="PANTHER" id="PTHR10683">
    <property type="entry name" value="TRANSALDOLASE"/>
    <property type="match status" value="1"/>
</dbReference>
<dbReference type="PANTHER" id="PTHR10683:SF18">
    <property type="entry name" value="TRANSALDOLASE"/>
    <property type="match status" value="1"/>
</dbReference>
<dbReference type="Pfam" id="PF00923">
    <property type="entry name" value="TAL_FSA"/>
    <property type="match status" value="1"/>
</dbReference>
<dbReference type="SUPFAM" id="SSF51569">
    <property type="entry name" value="Aldolase"/>
    <property type="match status" value="1"/>
</dbReference>
<dbReference type="PROSITE" id="PS01054">
    <property type="entry name" value="TRANSALDOLASE_1"/>
    <property type="match status" value="1"/>
</dbReference>
<dbReference type="PROSITE" id="PS00958">
    <property type="entry name" value="TRANSALDOLASE_2"/>
    <property type="match status" value="1"/>
</dbReference>
<organism>
    <name type="scientific">Pseudomonas putida (strain GB-1)</name>
    <dbReference type="NCBI Taxonomy" id="76869"/>
    <lineage>
        <taxon>Bacteria</taxon>
        <taxon>Pseudomonadati</taxon>
        <taxon>Pseudomonadota</taxon>
        <taxon>Gammaproteobacteria</taxon>
        <taxon>Pseudomonadales</taxon>
        <taxon>Pseudomonadaceae</taxon>
        <taxon>Pseudomonas</taxon>
    </lineage>
</organism>
<gene>
    <name evidence="2" type="primary">tal</name>
    <name type="ordered locus">PputGB1_1709</name>
</gene>
<accession>B0KHA7</accession>
<name>TAL_PSEPG</name>
<proteinExistence type="inferred from homology"/>
<reference key="1">
    <citation type="submission" date="2008-01" db="EMBL/GenBank/DDBJ databases">
        <title>Complete sequence of Pseudomonas putida GB-1.</title>
        <authorList>
            <consortium name="US DOE Joint Genome Institute"/>
            <person name="Copeland A."/>
            <person name="Lucas S."/>
            <person name="Lapidus A."/>
            <person name="Barry K."/>
            <person name="Glavina del Rio T."/>
            <person name="Dalin E."/>
            <person name="Tice H."/>
            <person name="Pitluck S."/>
            <person name="Bruce D."/>
            <person name="Goodwin L."/>
            <person name="Chertkov O."/>
            <person name="Brettin T."/>
            <person name="Detter J.C."/>
            <person name="Han C."/>
            <person name="Kuske C.R."/>
            <person name="Schmutz J."/>
            <person name="Larimer F."/>
            <person name="Land M."/>
            <person name="Hauser L."/>
            <person name="Kyrpides N."/>
            <person name="Kim E."/>
            <person name="McCarthy J.K."/>
            <person name="Richardson P."/>
        </authorList>
    </citation>
    <scope>NUCLEOTIDE SEQUENCE [LARGE SCALE GENOMIC DNA]</scope>
    <source>
        <strain>GB-1</strain>
    </source>
</reference>